<feature type="chain" id="PRO_0000331967" description="Chaperonin GroEL 2">
    <location>
        <begin position="1"/>
        <end position="537"/>
    </location>
</feature>
<feature type="binding site" evidence="1">
    <location>
        <begin position="29"/>
        <end position="32"/>
    </location>
    <ligand>
        <name>ATP</name>
        <dbReference type="ChEBI" id="CHEBI:30616"/>
    </ligand>
</feature>
<feature type="binding site" evidence="1">
    <location>
        <begin position="86"/>
        <end position="90"/>
    </location>
    <ligand>
        <name>ATP</name>
        <dbReference type="ChEBI" id="CHEBI:30616"/>
    </ligand>
</feature>
<feature type="binding site" evidence="1">
    <location>
        <position position="412"/>
    </location>
    <ligand>
        <name>ATP</name>
        <dbReference type="ChEBI" id="CHEBI:30616"/>
    </ligand>
</feature>
<feature type="binding site" evidence="1">
    <location>
        <position position="495"/>
    </location>
    <ligand>
        <name>ATP</name>
        <dbReference type="ChEBI" id="CHEBI:30616"/>
    </ligand>
</feature>
<organism>
    <name type="scientific">Paenarthrobacter aurescens (strain TC1)</name>
    <dbReference type="NCBI Taxonomy" id="290340"/>
    <lineage>
        <taxon>Bacteria</taxon>
        <taxon>Bacillati</taxon>
        <taxon>Actinomycetota</taxon>
        <taxon>Actinomycetes</taxon>
        <taxon>Micrococcales</taxon>
        <taxon>Micrococcaceae</taxon>
        <taxon>Paenarthrobacter</taxon>
    </lineage>
</organism>
<name>CH602_PAEAT</name>
<dbReference type="EC" id="5.6.1.7" evidence="1"/>
<dbReference type="EMBL" id="CP000474">
    <property type="protein sequence ID" value="ABM08678.1"/>
    <property type="molecule type" value="Genomic_DNA"/>
</dbReference>
<dbReference type="SMR" id="A1R8M1"/>
<dbReference type="STRING" id="290340.AAur_2874"/>
<dbReference type="KEGG" id="aau:AAur_2874"/>
<dbReference type="eggNOG" id="COG0459">
    <property type="taxonomic scope" value="Bacteria"/>
</dbReference>
<dbReference type="HOGENOM" id="CLU_016503_3_0_11"/>
<dbReference type="OrthoDB" id="9766614at2"/>
<dbReference type="Proteomes" id="UP000000637">
    <property type="component" value="Chromosome"/>
</dbReference>
<dbReference type="GO" id="GO:0005737">
    <property type="term" value="C:cytoplasm"/>
    <property type="evidence" value="ECO:0007669"/>
    <property type="project" value="UniProtKB-SubCell"/>
</dbReference>
<dbReference type="GO" id="GO:0005524">
    <property type="term" value="F:ATP binding"/>
    <property type="evidence" value="ECO:0007669"/>
    <property type="project" value="UniProtKB-UniRule"/>
</dbReference>
<dbReference type="GO" id="GO:0140662">
    <property type="term" value="F:ATP-dependent protein folding chaperone"/>
    <property type="evidence" value="ECO:0007669"/>
    <property type="project" value="InterPro"/>
</dbReference>
<dbReference type="GO" id="GO:0016853">
    <property type="term" value="F:isomerase activity"/>
    <property type="evidence" value="ECO:0007669"/>
    <property type="project" value="UniProtKB-KW"/>
</dbReference>
<dbReference type="GO" id="GO:0051082">
    <property type="term" value="F:unfolded protein binding"/>
    <property type="evidence" value="ECO:0007669"/>
    <property type="project" value="UniProtKB-UniRule"/>
</dbReference>
<dbReference type="GO" id="GO:0042026">
    <property type="term" value="P:protein refolding"/>
    <property type="evidence" value="ECO:0007669"/>
    <property type="project" value="UniProtKB-UniRule"/>
</dbReference>
<dbReference type="CDD" id="cd03344">
    <property type="entry name" value="GroEL"/>
    <property type="match status" value="1"/>
</dbReference>
<dbReference type="FunFam" id="3.50.7.10:FF:000001">
    <property type="entry name" value="60 kDa chaperonin"/>
    <property type="match status" value="1"/>
</dbReference>
<dbReference type="Gene3D" id="3.50.7.10">
    <property type="entry name" value="GroEL"/>
    <property type="match status" value="1"/>
</dbReference>
<dbReference type="Gene3D" id="1.10.560.10">
    <property type="entry name" value="GroEL-like equatorial domain"/>
    <property type="match status" value="1"/>
</dbReference>
<dbReference type="Gene3D" id="3.30.260.10">
    <property type="entry name" value="TCP-1-like chaperonin intermediate domain"/>
    <property type="match status" value="1"/>
</dbReference>
<dbReference type="HAMAP" id="MF_00600">
    <property type="entry name" value="CH60"/>
    <property type="match status" value="1"/>
</dbReference>
<dbReference type="InterPro" id="IPR001844">
    <property type="entry name" value="Cpn60/GroEL"/>
</dbReference>
<dbReference type="InterPro" id="IPR002423">
    <property type="entry name" value="Cpn60/GroEL/TCP-1"/>
</dbReference>
<dbReference type="InterPro" id="IPR027409">
    <property type="entry name" value="GroEL-like_apical_dom_sf"/>
</dbReference>
<dbReference type="InterPro" id="IPR027413">
    <property type="entry name" value="GROEL-like_equatorial_sf"/>
</dbReference>
<dbReference type="InterPro" id="IPR027410">
    <property type="entry name" value="TCP-1-like_intermed_sf"/>
</dbReference>
<dbReference type="NCBIfam" id="TIGR02348">
    <property type="entry name" value="GroEL"/>
    <property type="match status" value="1"/>
</dbReference>
<dbReference type="NCBIfam" id="NF000592">
    <property type="entry name" value="PRK00013.1"/>
    <property type="match status" value="1"/>
</dbReference>
<dbReference type="NCBIfam" id="NF009487">
    <property type="entry name" value="PRK12849.1"/>
    <property type="match status" value="1"/>
</dbReference>
<dbReference type="NCBIfam" id="NF009488">
    <property type="entry name" value="PRK12850.1"/>
    <property type="match status" value="1"/>
</dbReference>
<dbReference type="NCBIfam" id="NF009489">
    <property type="entry name" value="PRK12851.1"/>
    <property type="match status" value="1"/>
</dbReference>
<dbReference type="PANTHER" id="PTHR45633">
    <property type="entry name" value="60 KDA HEAT SHOCK PROTEIN, MITOCHONDRIAL"/>
    <property type="match status" value="1"/>
</dbReference>
<dbReference type="Pfam" id="PF00118">
    <property type="entry name" value="Cpn60_TCP1"/>
    <property type="match status" value="1"/>
</dbReference>
<dbReference type="PRINTS" id="PR00298">
    <property type="entry name" value="CHAPERONIN60"/>
</dbReference>
<dbReference type="SUPFAM" id="SSF52029">
    <property type="entry name" value="GroEL apical domain-like"/>
    <property type="match status" value="1"/>
</dbReference>
<dbReference type="SUPFAM" id="SSF48592">
    <property type="entry name" value="GroEL equatorial domain-like"/>
    <property type="match status" value="1"/>
</dbReference>
<dbReference type="SUPFAM" id="SSF54849">
    <property type="entry name" value="GroEL-intermediate domain like"/>
    <property type="match status" value="1"/>
</dbReference>
<gene>
    <name evidence="1" type="primary">groEL2</name>
    <name evidence="1" type="synonym">groL2</name>
    <name type="ordered locus">AAur_2874</name>
</gene>
<evidence type="ECO:0000255" key="1">
    <source>
        <dbReference type="HAMAP-Rule" id="MF_00600"/>
    </source>
</evidence>
<keyword id="KW-0067">ATP-binding</keyword>
<keyword id="KW-0143">Chaperone</keyword>
<keyword id="KW-0963">Cytoplasm</keyword>
<keyword id="KW-0413">Isomerase</keyword>
<keyword id="KW-0547">Nucleotide-binding</keyword>
<reference key="1">
    <citation type="journal article" date="2006" name="PLoS Genet.">
        <title>Secrets of soil survival revealed by the genome sequence of Arthrobacter aurescens TC1.</title>
        <authorList>
            <person name="Mongodin E.F."/>
            <person name="Shapir N."/>
            <person name="Daugherty S.C."/>
            <person name="DeBoy R.T."/>
            <person name="Emerson J.B."/>
            <person name="Shvartzbeyn A."/>
            <person name="Radune D."/>
            <person name="Vamathevan J."/>
            <person name="Riggs F."/>
            <person name="Grinberg V."/>
            <person name="Khouri H.M."/>
            <person name="Wackett L.P."/>
            <person name="Nelson K.E."/>
            <person name="Sadowsky M.J."/>
        </authorList>
    </citation>
    <scope>NUCLEOTIDE SEQUENCE [LARGE SCALE GENOMIC DNA]</scope>
    <source>
        <strain>TC1</strain>
    </source>
</reference>
<sequence length="537" mass="56552">MAKQLAFNDAARRSLEAGIDKLANTVKVTLGPRGRNVVLDKKWGAPTITNDGVTIAREVELDDPYENLGAQLAKEVATKTNDVAGDGTTTATVLAQALVKEGLRNVAAGAAPGEIKRGIEVSVEAVAARLLENAREVEGTQVASVAAISAQSDEVGELLAEAFGKVGKDGVITIEESSTTQTELVLTEGMQFDKGYLSPYFVTDAERQEAVLEDALILINQGKISSLQDFLPLLEKALQANKPLFIIAEDIEGEALSTLIVNRIRGTLNVVAVKAPGFGDRRKAMLQDIATLTGAQVVSPDLGLTLDTVGLEVLGTARRITVTKDNTTIVDGAGTAQDVADRVAQLRAELTRTDSDWDKEKLQERLAKLAGGIGVIKVGAATEVELKEKKHRIEDAVSSTRAALEEGIVSGGGSALIHALKALDESPAVKALEGDAAAAVGIVRRALVQPLRWIAQNAGFDGFVVVAKVSELEANHGFNAKSGEYEDLIAAGVIDPVKVTRSALRNAASIAALVLTTETLVAEKPAEEEDAHAGHQH</sequence>
<comment type="function">
    <text evidence="1">Together with its co-chaperonin GroES, plays an essential role in assisting protein folding. The GroEL-GroES system forms a nano-cage that allows encapsulation of the non-native substrate proteins and provides a physical environment optimized to promote and accelerate protein folding.</text>
</comment>
<comment type="catalytic activity">
    <reaction evidence="1">
        <text>ATP + H2O + a folded polypeptide = ADP + phosphate + an unfolded polypeptide.</text>
        <dbReference type="EC" id="5.6.1.7"/>
    </reaction>
</comment>
<comment type="subunit">
    <text evidence="1">Forms a cylinder of 14 subunits composed of two heptameric rings stacked back-to-back. Interacts with the co-chaperonin GroES.</text>
</comment>
<comment type="subcellular location">
    <subcellularLocation>
        <location evidence="1">Cytoplasm</location>
    </subcellularLocation>
</comment>
<comment type="similarity">
    <text evidence="1">Belongs to the chaperonin (HSP60) family.</text>
</comment>
<accession>A1R8M1</accession>
<protein>
    <recommendedName>
        <fullName evidence="1">Chaperonin GroEL 2</fullName>
        <ecNumber evidence="1">5.6.1.7</ecNumber>
    </recommendedName>
    <alternativeName>
        <fullName evidence="1">60 kDa chaperonin 2</fullName>
    </alternativeName>
    <alternativeName>
        <fullName evidence="1">Chaperonin-60 2</fullName>
        <shortName evidence="1">Cpn60 2</shortName>
    </alternativeName>
</protein>
<proteinExistence type="inferred from homology"/>